<proteinExistence type="inferred from homology"/>
<name>PLSB_SHIBS</name>
<gene>
    <name evidence="1" type="primary">plsB</name>
    <name type="ordered locus">SBO_4076</name>
</gene>
<keyword id="KW-0012">Acyltransferase</keyword>
<keyword id="KW-0997">Cell inner membrane</keyword>
<keyword id="KW-1003">Cell membrane</keyword>
<keyword id="KW-0444">Lipid biosynthesis</keyword>
<keyword id="KW-0443">Lipid metabolism</keyword>
<keyword id="KW-0472">Membrane</keyword>
<keyword id="KW-0594">Phospholipid biosynthesis</keyword>
<keyword id="KW-1208">Phospholipid metabolism</keyword>
<keyword id="KW-0808">Transferase</keyword>
<feature type="chain" id="PRO_1000049464" description="Glycerol-3-phosphate acyltransferase">
    <location>
        <begin position="1"/>
        <end position="827"/>
    </location>
</feature>
<feature type="short sequence motif" description="HXXXXD motif">
    <location>
        <begin position="325"/>
        <end position="330"/>
    </location>
</feature>
<dbReference type="EC" id="2.3.1.15" evidence="1"/>
<dbReference type="EMBL" id="CP000036">
    <property type="protein sequence ID" value="ABB68509.1"/>
    <property type="molecule type" value="Genomic_DNA"/>
</dbReference>
<dbReference type="SMR" id="Q31TU9"/>
<dbReference type="KEGG" id="sbo:SBO_4076"/>
<dbReference type="HOGENOM" id="CLU_015407_0_0_6"/>
<dbReference type="UniPathway" id="UPA00557">
    <property type="reaction ID" value="UER00612"/>
</dbReference>
<dbReference type="Proteomes" id="UP000007067">
    <property type="component" value="Chromosome"/>
</dbReference>
<dbReference type="GO" id="GO:0005886">
    <property type="term" value="C:plasma membrane"/>
    <property type="evidence" value="ECO:0007669"/>
    <property type="project" value="UniProtKB-SubCell"/>
</dbReference>
<dbReference type="GO" id="GO:0004366">
    <property type="term" value="F:glycerol-3-phosphate O-acyltransferase activity"/>
    <property type="evidence" value="ECO:0007669"/>
    <property type="project" value="UniProtKB-UniRule"/>
</dbReference>
<dbReference type="GO" id="GO:0016024">
    <property type="term" value="P:CDP-diacylglycerol biosynthetic process"/>
    <property type="evidence" value="ECO:0007669"/>
    <property type="project" value="UniProtKB-UniRule"/>
</dbReference>
<dbReference type="GO" id="GO:0006631">
    <property type="term" value="P:fatty acid metabolic process"/>
    <property type="evidence" value="ECO:0007669"/>
    <property type="project" value="TreeGrafter"/>
</dbReference>
<dbReference type="CDD" id="cd07993">
    <property type="entry name" value="LPLAT_DHAPAT-like"/>
    <property type="match status" value="1"/>
</dbReference>
<dbReference type="HAMAP" id="MF_00393">
    <property type="entry name" value="Glyc3P_acyltrans"/>
    <property type="match status" value="1"/>
</dbReference>
<dbReference type="InterPro" id="IPR022284">
    <property type="entry name" value="GPAT/DHAPAT"/>
</dbReference>
<dbReference type="InterPro" id="IPR045520">
    <property type="entry name" value="GPAT/DHAPAT_C"/>
</dbReference>
<dbReference type="InterPro" id="IPR041728">
    <property type="entry name" value="GPAT/DHAPAT_LPLAT"/>
</dbReference>
<dbReference type="InterPro" id="IPR028354">
    <property type="entry name" value="GPAT_PlsB"/>
</dbReference>
<dbReference type="InterPro" id="IPR002123">
    <property type="entry name" value="Plipid/glycerol_acylTrfase"/>
</dbReference>
<dbReference type="NCBIfam" id="TIGR03703">
    <property type="entry name" value="plsB"/>
    <property type="match status" value="1"/>
</dbReference>
<dbReference type="NCBIfam" id="NF003441">
    <property type="entry name" value="PRK04974.1"/>
    <property type="match status" value="1"/>
</dbReference>
<dbReference type="PANTHER" id="PTHR12563:SF17">
    <property type="entry name" value="DIHYDROXYACETONE PHOSPHATE ACYLTRANSFERASE"/>
    <property type="match status" value="1"/>
</dbReference>
<dbReference type="PANTHER" id="PTHR12563">
    <property type="entry name" value="GLYCEROL-3-PHOSPHATE ACYLTRANSFERASE"/>
    <property type="match status" value="1"/>
</dbReference>
<dbReference type="Pfam" id="PF01553">
    <property type="entry name" value="Acyltransferase"/>
    <property type="match status" value="1"/>
</dbReference>
<dbReference type="Pfam" id="PF19277">
    <property type="entry name" value="GPAT_C"/>
    <property type="match status" value="1"/>
</dbReference>
<dbReference type="PIRSF" id="PIRSF500064">
    <property type="entry name" value="GPAT"/>
    <property type="match status" value="1"/>
</dbReference>
<dbReference type="PIRSF" id="PIRSF000437">
    <property type="entry name" value="GPAT_DHAPAT"/>
    <property type="match status" value="1"/>
</dbReference>
<dbReference type="SMART" id="SM00563">
    <property type="entry name" value="PlsC"/>
    <property type="match status" value="1"/>
</dbReference>
<dbReference type="SUPFAM" id="SSF69593">
    <property type="entry name" value="Glycerol-3-phosphate (1)-acyltransferase"/>
    <property type="match status" value="1"/>
</dbReference>
<evidence type="ECO:0000255" key="1">
    <source>
        <dbReference type="HAMAP-Rule" id="MF_00393"/>
    </source>
</evidence>
<reference key="1">
    <citation type="journal article" date="2005" name="Nucleic Acids Res.">
        <title>Genome dynamics and diversity of Shigella species, the etiologic agents of bacillary dysentery.</title>
        <authorList>
            <person name="Yang F."/>
            <person name="Yang J."/>
            <person name="Zhang X."/>
            <person name="Chen L."/>
            <person name="Jiang Y."/>
            <person name="Yan Y."/>
            <person name="Tang X."/>
            <person name="Wang J."/>
            <person name="Xiong Z."/>
            <person name="Dong J."/>
            <person name="Xue Y."/>
            <person name="Zhu Y."/>
            <person name="Xu X."/>
            <person name="Sun L."/>
            <person name="Chen S."/>
            <person name="Nie H."/>
            <person name="Peng J."/>
            <person name="Xu J."/>
            <person name="Wang Y."/>
            <person name="Yuan Z."/>
            <person name="Wen Y."/>
            <person name="Yao Z."/>
            <person name="Shen Y."/>
            <person name="Qiang B."/>
            <person name="Hou Y."/>
            <person name="Yu J."/>
            <person name="Jin Q."/>
        </authorList>
    </citation>
    <scope>NUCLEOTIDE SEQUENCE [LARGE SCALE GENOMIC DNA]</scope>
    <source>
        <strain>Sb227</strain>
    </source>
</reference>
<accession>Q31TU9</accession>
<organism>
    <name type="scientific">Shigella boydii serotype 4 (strain Sb227)</name>
    <dbReference type="NCBI Taxonomy" id="300268"/>
    <lineage>
        <taxon>Bacteria</taxon>
        <taxon>Pseudomonadati</taxon>
        <taxon>Pseudomonadota</taxon>
        <taxon>Gammaproteobacteria</taxon>
        <taxon>Enterobacterales</taxon>
        <taxon>Enterobacteriaceae</taxon>
        <taxon>Shigella</taxon>
    </lineage>
</organism>
<comment type="catalytic activity">
    <reaction evidence="1">
        <text>sn-glycerol 3-phosphate + an acyl-CoA = a 1-acyl-sn-glycero-3-phosphate + CoA</text>
        <dbReference type="Rhea" id="RHEA:15325"/>
        <dbReference type="ChEBI" id="CHEBI:57287"/>
        <dbReference type="ChEBI" id="CHEBI:57597"/>
        <dbReference type="ChEBI" id="CHEBI:57970"/>
        <dbReference type="ChEBI" id="CHEBI:58342"/>
        <dbReference type="EC" id="2.3.1.15"/>
    </reaction>
</comment>
<comment type="pathway">
    <text evidence="1">Phospholipid metabolism; CDP-diacylglycerol biosynthesis; CDP-diacylglycerol from sn-glycerol 3-phosphate: step 1/3.</text>
</comment>
<comment type="subcellular location">
    <subcellularLocation>
        <location evidence="1">Cell inner membrane</location>
        <topology evidence="1">Peripheral membrane protein</topology>
        <orientation evidence="1">Cytoplasmic side</orientation>
    </subcellularLocation>
</comment>
<comment type="domain">
    <text evidence="1">The HXXXXD motif is essential for acyltransferase activity and may constitute the binding site for the phosphate moiety of the glycerol-3-phosphate.</text>
</comment>
<comment type="similarity">
    <text evidence="1">Belongs to the GPAT/DAPAT family.</text>
</comment>
<protein>
    <recommendedName>
        <fullName evidence="1">Glycerol-3-phosphate acyltransferase</fullName>
        <shortName evidence="1">GPAT</shortName>
        <ecNumber evidence="1">2.3.1.15</ecNumber>
    </recommendedName>
</protein>
<sequence length="827" mass="93712">MTFCYPCRAFALLTRGFTSFMSGWPRIYYKLLNLPLSILVKSKSIPADPAPELGLDTSRPIMYVLPYNSKADLLTLRAQCLAHDLPDPLEPLEIDGTLLPRYVFIHGGPRVFTYYTPKEESIKLFHDYLDLHRSNPNLDVQMVPVSVMFGRAPGREKGEVNPPLRMLNGVQKFFAVLWLGRDSFVRFSPSVSLRRMADEHGTDKTIAQKLARVARMHFARQRLAAVGPRLPARQDLFNKLLASRAIAKAVEDEARSKKISHEKAQQNAIALMEEIAANFSYEMIRLTDRILGFTWNRLYQGINVHNAERVRQLAHDGHELVYVPCHRSHMDYLLLSYVLYHQGLVPPHIAAGINLNFWPAGPIFRRLGAFFIRRTFKGNKLYSTVFREYLGELFSRGYSVEYFVEGGRSRTGRLLDPKTGTLSMTIQAMLRGGTRPITLIPIYIGYEHVMEVGTYAKELRGATKEKESLPQMLRGLSKLRNLGQGYVNFGEPMPLMTYLNQHVPDWRESIDPIEAVRPAWLTPTVNNIAADLMVRINNAGAANAMNLCCTALLASRQRSLTREQLTEQLNCYLDLMRNVPYSTDSTVPSASASELIDHALQMNKFEVEKDTIGDIIILPREQAVLMTYYRNNIAHMLVLPSLMAAIVTQHRHISRDVLMEHVNVLYPMLKAELFLRWDRDELPDVIDALANEMQRQGLITLQDDELHINPSHSRTLQLLAAGARETLQRYAITFWLLSANPSINRGTLEKESRTVAQRLSVLHGINAPEFFDKAVFSSLVLTLRDEGYISDSGDAEPAETMKVYQLLAELITSDVRLTIESATQGEG</sequence>